<protein>
    <recommendedName>
        <fullName>Dolichyl-diphosphooligosaccharide--protein glycosyltransferase subunit TMEM258</fullName>
        <shortName>Oligosaccharyl transferase subunit TMEM258</shortName>
    </recommendedName>
    <alternativeName>
        <fullName evidence="11">Transmembrane protein 258</fullName>
    </alternativeName>
</protein>
<gene>
    <name evidence="12" type="primary">TMEM258</name>
    <name type="synonym">C11orf10</name>
    <name type="ORF">HSPC005</name>
</gene>
<keyword id="KW-0002">3D-structure</keyword>
<keyword id="KW-0007">Acetylation</keyword>
<keyword id="KW-0963">Cytoplasm</keyword>
<keyword id="KW-0903">Direct protein sequencing</keyword>
<keyword id="KW-0256">Endoplasmic reticulum</keyword>
<keyword id="KW-0472">Membrane</keyword>
<keyword id="KW-1267">Proteomics identification</keyword>
<keyword id="KW-1185">Reference proteome</keyword>
<keyword id="KW-0812">Transmembrane</keyword>
<keyword id="KW-1133">Transmembrane helix</keyword>
<name>TM258_HUMAN</name>
<feature type="chain" id="PRO_0000221142" description="Dolichyl-diphosphooligosaccharide--protein glycosyltransferase subunit TMEM258">
    <location>
        <begin position="1"/>
        <end position="79"/>
    </location>
</feature>
<feature type="transmembrane region" description="Helical" evidence="3">
    <location>
        <begin position="17"/>
        <end position="37"/>
    </location>
</feature>
<feature type="transmembrane region" description="Helical" evidence="3">
    <location>
        <begin position="55"/>
        <end position="75"/>
    </location>
</feature>
<feature type="modified residue" description="N-acetylmethionine" evidence="17 18">
    <location>
        <position position="1"/>
    </location>
</feature>
<feature type="strand" evidence="20">
    <location>
        <begin position="4"/>
        <end position="8"/>
    </location>
</feature>
<feature type="helix" evidence="19">
    <location>
        <begin position="15"/>
        <end position="17"/>
    </location>
</feature>
<feature type="helix" evidence="19">
    <location>
        <begin position="18"/>
        <end position="42"/>
    </location>
</feature>
<feature type="helix" evidence="19">
    <location>
        <begin position="45"/>
        <end position="47"/>
    </location>
</feature>
<feature type="helix" evidence="19">
    <location>
        <begin position="50"/>
        <end position="75"/>
    </location>
</feature>
<proteinExistence type="evidence at protein level"/>
<evidence type="ECO:0000250" key="1">
    <source>
        <dbReference type="UniProtKB" id="E2RKN8"/>
    </source>
</evidence>
<evidence type="ECO:0000250" key="2">
    <source>
        <dbReference type="UniProtKB" id="P61166"/>
    </source>
</evidence>
<evidence type="ECO:0000255" key="3"/>
<evidence type="ECO:0000269" key="4">
    <source>
    </source>
</evidence>
<evidence type="ECO:0000269" key="5">
    <source>
    </source>
</evidence>
<evidence type="ECO:0000269" key="6">
    <source>
    </source>
</evidence>
<evidence type="ECO:0000269" key="7">
    <source>
    </source>
</evidence>
<evidence type="ECO:0000269" key="8">
    <source>
    </source>
</evidence>
<evidence type="ECO:0000269" key="9">
    <source>
    </source>
</evidence>
<evidence type="ECO:0000269" key="10">
    <source>
    </source>
</evidence>
<evidence type="ECO:0000305" key="11"/>
<evidence type="ECO:0000312" key="12">
    <source>
        <dbReference type="HGNC" id="HGNC:1164"/>
    </source>
</evidence>
<evidence type="ECO:0007744" key="13">
    <source>
        <dbReference type="PDB" id="6S7O"/>
    </source>
</evidence>
<evidence type="ECO:0007744" key="14">
    <source>
        <dbReference type="PDB" id="6S7T"/>
    </source>
</evidence>
<evidence type="ECO:0007744" key="15">
    <source>
        <dbReference type="PDB" id="8B6L"/>
    </source>
</evidence>
<evidence type="ECO:0007744" key="16">
    <source>
        <dbReference type="PDB" id="8PN9"/>
    </source>
</evidence>
<evidence type="ECO:0007744" key="17">
    <source>
    </source>
</evidence>
<evidence type="ECO:0007744" key="18">
    <source>
    </source>
</evidence>
<evidence type="ECO:0007829" key="19">
    <source>
        <dbReference type="PDB" id="6S7O"/>
    </source>
</evidence>
<evidence type="ECO:0007829" key="20">
    <source>
        <dbReference type="PDB" id="6S7T"/>
    </source>
</evidence>
<dbReference type="EMBL" id="AF086763">
    <property type="protein sequence ID" value="AAF28401.1"/>
    <property type="molecule type" value="mRNA"/>
</dbReference>
<dbReference type="EMBL" id="AF070661">
    <property type="protein sequence ID" value="AAD20967.1"/>
    <property type="molecule type" value="mRNA"/>
</dbReference>
<dbReference type="EMBL" id="AK291683">
    <property type="protein sequence ID" value="BAF84372.1"/>
    <property type="molecule type" value="mRNA"/>
</dbReference>
<dbReference type="EMBL" id="AP002380">
    <property type="status" value="NOT_ANNOTATED_CDS"/>
    <property type="molecule type" value="Genomic_DNA"/>
</dbReference>
<dbReference type="EMBL" id="CH471076">
    <property type="protein sequence ID" value="EAW73970.1"/>
    <property type="molecule type" value="Genomic_DNA"/>
</dbReference>
<dbReference type="EMBL" id="BC002750">
    <property type="protein sequence ID" value="AAH02750.1"/>
    <property type="molecule type" value="mRNA"/>
</dbReference>
<dbReference type="EMBL" id="BC015968">
    <property type="protein sequence ID" value="AAH15968.1"/>
    <property type="molecule type" value="mRNA"/>
</dbReference>
<dbReference type="CCDS" id="CCDS8009.1"/>
<dbReference type="RefSeq" id="NP_055021.1">
    <property type="nucleotide sequence ID" value="NM_014206.4"/>
</dbReference>
<dbReference type="PDB" id="6S7O">
    <property type="method" value="EM"/>
    <property type="resolution" value="3.50 A"/>
    <property type="chains" value="C=1-79"/>
</dbReference>
<dbReference type="PDB" id="6S7T">
    <property type="method" value="EM"/>
    <property type="resolution" value="3.50 A"/>
    <property type="chains" value="C=1-79"/>
</dbReference>
<dbReference type="PDB" id="8B6L">
    <property type="method" value="EM"/>
    <property type="resolution" value="7.60 A"/>
    <property type="chains" value="L=1-79"/>
</dbReference>
<dbReference type="PDB" id="8PN9">
    <property type="method" value="EM"/>
    <property type="resolution" value="3.61 A"/>
    <property type="chains" value="C=1-79"/>
</dbReference>
<dbReference type="PDBsum" id="6S7O"/>
<dbReference type="PDBsum" id="6S7T"/>
<dbReference type="PDBsum" id="8B6L"/>
<dbReference type="PDBsum" id="8PN9"/>
<dbReference type="EMDB" id="EMD-10110"/>
<dbReference type="EMDB" id="EMD-10112"/>
<dbReference type="EMDB" id="EMD-15870"/>
<dbReference type="EMDB" id="EMD-17779"/>
<dbReference type="SMR" id="P61165"/>
<dbReference type="BioGRID" id="107204">
    <property type="interactions" value="44"/>
</dbReference>
<dbReference type="ComplexPortal" id="CPX-5621">
    <property type="entry name" value="Oligosaccharyltransferase complex A"/>
</dbReference>
<dbReference type="ComplexPortal" id="CPX-5622">
    <property type="entry name" value="Oligosaccharyltransferase complex B, MAGT1 variant"/>
</dbReference>
<dbReference type="ComplexPortal" id="CPX-8738">
    <property type="entry name" value="Oligosaccharyltransferase complex B, TUCS3 variant"/>
</dbReference>
<dbReference type="FunCoup" id="P61165">
    <property type="interactions" value="840"/>
</dbReference>
<dbReference type="IntAct" id="P61165">
    <property type="interactions" value="24"/>
</dbReference>
<dbReference type="STRING" id="9606.ENSP00000443216"/>
<dbReference type="TCDB" id="9.B.142.3.17">
    <property type="family name" value="the integral membrane glycosyltransferase family 39 (gt39) family"/>
</dbReference>
<dbReference type="GlyGen" id="P61165">
    <property type="glycosylation" value="1 site, 1 O-linked glycan (1 site)"/>
</dbReference>
<dbReference type="iPTMnet" id="P61165"/>
<dbReference type="PhosphoSitePlus" id="P61165"/>
<dbReference type="BioMuta" id="TMEM258"/>
<dbReference type="DMDM" id="47117653"/>
<dbReference type="jPOST" id="P61165"/>
<dbReference type="MassIVE" id="P61165"/>
<dbReference type="PaxDb" id="9606-ENSP00000443216"/>
<dbReference type="PeptideAtlas" id="P61165"/>
<dbReference type="ProteomicsDB" id="57271"/>
<dbReference type="Pumba" id="P61165"/>
<dbReference type="TopDownProteomics" id="P61165"/>
<dbReference type="Antibodypedia" id="51765">
    <property type="antibodies" value="9 antibodies from 7 providers"/>
</dbReference>
<dbReference type="DNASU" id="746"/>
<dbReference type="Ensembl" id="ENST00000257262.12">
    <property type="protein sequence ID" value="ENSP00000257262.8"/>
    <property type="gene ID" value="ENSG00000134825.16"/>
</dbReference>
<dbReference type="Ensembl" id="ENST00000537328.6">
    <property type="protein sequence ID" value="ENSP00000443216.1"/>
    <property type="gene ID" value="ENSG00000134825.16"/>
</dbReference>
<dbReference type="GeneID" id="746"/>
<dbReference type="KEGG" id="hsa:746"/>
<dbReference type="MANE-Select" id="ENST00000537328.6">
    <property type="protein sequence ID" value="ENSP00000443216.1"/>
    <property type="RefSeq nucleotide sequence ID" value="NM_014206.4"/>
    <property type="RefSeq protein sequence ID" value="NP_055021.1"/>
</dbReference>
<dbReference type="UCSC" id="uc001nsf.4">
    <property type="organism name" value="human"/>
</dbReference>
<dbReference type="AGR" id="HGNC:1164"/>
<dbReference type="CTD" id="746"/>
<dbReference type="DisGeNET" id="746"/>
<dbReference type="GeneCards" id="TMEM258"/>
<dbReference type="HGNC" id="HGNC:1164">
    <property type="gene designation" value="TMEM258"/>
</dbReference>
<dbReference type="HPA" id="ENSG00000134825">
    <property type="expression patterns" value="Low tissue specificity"/>
</dbReference>
<dbReference type="MIM" id="617615">
    <property type="type" value="gene"/>
</dbReference>
<dbReference type="neXtProt" id="NX_P61165"/>
<dbReference type="OpenTargets" id="ENSG00000134825"/>
<dbReference type="PharmGKB" id="PA25478"/>
<dbReference type="VEuPathDB" id="HostDB:ENSG00000134825"/>
<dbReference type="eggNOG" id="KOG4452">
    <property type="taxonomic scope" value="Eukaryota"/>
</dbReference>
<dbReference type="GeneTree" id="ENSGT00390000010089"/>
<dbReference type="InParanoid" id="P61165"/>
<dbReference type="OMA" id="MERYVGP"/>
<dbReference type="OrthoDB" id="18408at2759"/>
<dbReference type="PAN-GO" id="P61165">
    <property type="GO annotations" value="2 GO annotations based on evolutionary models"/>
</dbReference>
<dbReference type="PhylomeDB" id="P61165"/>
<dbReference type="TreeFam" id="TF300295"/>
<dbReference type="BRENDA" id="2.4.99.18">
    <property type="organism ID" value="2681"/>
</dbReference>
<dbReference type="PathwayCommons" id="P61165"/>
<dbReference type="SignaLink" id="P61165"/>
<dbReference type="SIGNOR" id="P61165"/>
<dbReference type="UniPathway" id="UPA00378"/>
<dbReference type="BioGRID-ORCS" id="746">
    <property type="hits" value="613 hits in 1162 CRISPR screens"/>
</dbReference>
<dbReference type="ChiTaRS" id="TMEM258">
    <property type="organism name" value="human"/>
</dbReference>
<dbReference type="GenomeRNAi" id="746"/>
<dbReference type="Pharos" id="P61165">
    <property type="development level" value="Tdark"/>
</dbReference>
<dbReference type="PRO" id="PR:P61165"/>
<dbReference type="Proteomes" id="UP000005640">
    <property type="component" value="Chromosome 11"/>
</dbReference>
<dbReference type="RNAct" id="P61165">
    <property type="molecule type" value="protein"/>
</dbReference>
<dbReference type="Bgee" id="ENSG00000134825">
    <property type="expression patterns" value="Expressed in type B pancreatic cell and 205 other cell types or tissues"/>
</dbReference>
<dbReference type="ExpressionAtlas" id="P61165">
    <property type="expression patterns" value="baseline and differential"/>
</dbReference>
<dbReference type="GO" id="GO:0005737">
    <property type="term" value="C:cytoplasm"/>
    <property type="evidence" value="ECO:0000314"/>
    <property type="project" value="UniProtKB"/>
</dbReference>
<dbReference type="GO" id="GO:0005783">
    <property type="term" value="C:endoplasmic reticulum"/>
    <property type="evidence" value="ECO:0000314"/>
    <property type="project" value="UniProtKB"/>
</dbReference>
<dbReference type="GO" id="GO:0005789">
    <property type="term" value="C:endoplasmic reticulum membrane"/>
    <property type="evidence" value="ECO:0000318"/>
    <property type="project" value="GO_Central"/>
</dbReference>
<dbReference type="GO" id="GO:0016020">
    <property type="term" value="C:membrane"/>
    <property type="evidence" value="ECO:0000314"/>
    <property type="project" value="UniProtKB"/>
</dbReference>
<dbReference type="GO" id="GO:0008250">
    <property type="term" value="C:oligosaccharyltransferase complex"/>
    <property type="evidence" value="ECO:0000314"/>
    <property type="project" value="UniProtKB"/>
</dbReference>
<dbReference type="GO" id="GO:0160226">
    <property type="term" value="C:oligosaccharyltransferase complex A"/>
    <property type="evidence" value="ECO:0000314"/>
    <property type="project" value="UniProtKB"/>
</dbReference>
<dbReference type="GO" id="GO:0160227">
    <property type="term" value="C:oligosaccharyltransferase complex B"/>
    <property type="evidence" value="ECO:0000314"/>
    <property type="project" value="UniProtKB"/>
</dbReference>
<dbReference type="GO" id="GO:0062062">
    <property type="term" value="F:oligosaccharyltransferase complex binding"/>
    <property type="evidence" value="ECO:0000318"/>
    <property type="project" value="GO_Central"/>
</dbReference>
<dbReference type="GO" id="GO:1904019">
    <property type="term" value="P:epithelial cell apoptotic process"/>
    <property type="evidence" value="ECO:0007669"/>
    <property type="project" value="Ensembl"/>
</dbReference>
<dbReference type="GO" id="GO:0006954">
    <property type="term" value="P:inflammatory response"/>
    <property type="evidence" value="ECO:0007669"/>
    <property type="project" value="Ensembl"/>
</dbReference>
<dbReference type="GO" id="GO:0006487">
    <property type="term" value="P:protein N-linked glycosylation"/>
    <property type="evidence" value="ECO:0000315"/>
    <property type="project" value="UniProtKB"/>
</dbReference>
<dbReference type="GO" id="GO:0034976">
    <property type="term" value="P:response to endoplasmic reticulum stress"/>
    <property type="evidence" value="ECO:0000318"/>
    <property type="project" value="GO_Central"/>
</dbReference>
<dbReference type="InterPro" id="IPR007915">
    <property type="entry name" value="TMEM258/Ost5"/>
</dbReference>
<dbReference type="PANTHER" id="PTHR13636">
    <property type="entry name" value="TRANSMEMBRANE PROTEIN 258"/>
    <property type="match status" value="1"/>
</dbReference>
<dbReference type="Pfam" id="PF05251">
    <property type="entry name" value="Ost5"/>
    <property type="match status" value="1"/>
</dbReference>
<organism>
    <name type="scientific">Homo sapiens</name>
    <name type="common">Human</name>
    <dbReference type="NCBI Taxonomy" id="9606"/>
    <lineage>
        <taxon>Eukaryota</taxon>
        <taxon>Metazoa</taxon>
        <taxon>Chordata</taxon>
        <taxon>Craniata</taxon>
        <taxon>Vertebrata</taxon>
        <taxon>Euteleostomi</taxon>
        <taxon>Mammalia</taxon>
        <taxon>Eutheria</taxon>
        <taxon>Euarchontoglires</taxon>
        <taxon>Primates</taxon>
        <taxon>Haplorrhini</taxon>
        <taxon>Catarrhini</taxon>
        <taxon>Hominidae</taxon>
        <taxon>Homo</taxon>
    </lineage>
</organism>
<sequence>MELEAMSRYTSPVNPAVFPHLTVVLLAIGMFFTAWFFVYEVTSTKYTRDIYKELLISLVASLFMGFGVLFLLLWVGIYV</sequence>
<reference key="1">
    <citation type="submission" date="1998-08" db="EMBL/GenBank/DDBJ databases">
        <title>Identification and genomic characterization of seven novel genes from a 288 kb interval in 11q12-q13.1.</title>
        <authorList>
            <person name="Marquardt A."/>
            <person name="Stoehr H."/>
            <person name="Rivera A."/>
            <person name="Weber B.H.F."/>
        </authorList>
    </citation>
    <scope>NUCLEOTIDE SEQUENCE [MRNA]</scope>
</reference>
<reference key="2">
    <citation type="journal article" date="2000" name="Genome Res.">
        <title>Cloning and functional analysis of cDNAs with open reading frames for 300 previously undefined genes expressed in CD34+ hematopoietic stem/progenitor cells.</title>
        <authorList>
            <person name="Zhang Q.-H."/>
            <person name="Ye M."/>
            <person name="Wu X.-Y."/>
            <person name="Ren S.-X."/>
            <person name="Zhao M."/>
            <person name="Zhao C.-J."/>
            <person name="Fu G."/>
            <person name="Shen Y."/>
            <person name="Fan H.-Y."/>
            <person name="Lu G."/>
            <person name="Zhong M."/>
            <person name="Xu X.-R."/>
            <person name="Han Z.-G."/>
            <person name="Zhang J.-W."/>
            <person name="Tao J."/>
            <person name="Huang Q.-H."/>
            <person name="Zhou J."/>
            <person name="Hu G.-X."/>
            <person name="Gu J."/>
            <person name="Chen S.-J."/>
            <person name="Chen Z."/>
        </authorList>
    </citation>
    <scope>NUCLEOTIDE SEQUENCE [LARGE SCALE MRNA]</scope>
    <source>
        <tissue>Umbilical cord blood</tissue>
    </source>
</reference>
<reference key="3">
    <citation type="journal article" date="2004" name="Nat. Genet.">
        <title>Complete sequencing and characterization of 21,243 full-length human cDNAs.</title>
        <authorList>
            <person name="Ota T."/>
            <person name="Suzuki Y."/>
            <person name="Nishikawa T."/>
            <person name="Otsuki T."/>
            <person name="Sugiyama T."/>
            <person name="Irie R."/>
            <person name="Wakamatsu A."/>
            <person name="Hayashi K."/>
            <person name="Sato H."/>
            <person name="Nagai K."/>
            <person name="Kimura K."/>
            <person name="Makita H."/>
            <person name="Sekine M."/>
            <person name="Obayashi M."/>
            <person name="Nishi T."/>
            <person name="Shibahara T."/>
            <person name="Tanaka T."/>
            <person name="Ishii S."/>
            <person name="Yamamoto J."/>
            <person name="Saito K."/>
            <person name="Kawai Y."/>
            <person name="Isono Y."/>
            <person name="Nakamura Y."/>
            <person name="Nagahari K."/>
            <person name="Murakami K."/>
            <person name="Yasuda T."/>
            <person name="Iwayanagi T."/>
            <person name="Wagatsuma M."/>
            <person name="Shiratori A."/>
            <person name="Sudo H."/>
            <person name="Hosoiri T."/>
            <person name="Kaku Y."/>
            <person name="Kodaira H."/>
            <person name="Kondo H."/>
            <person name="Sugawara M."/>
            <person name="Takahashi M."/>
            <person name="Kanda K."/>
            <person name="Yokoi T."/>
            <person name="Furuya T."/>
            <person name="Kikkawa E."/>
            <person name="Omura Y."/>
            <person name="Abe K."/>
            <person name="Kamihara K."/>
            <person name="Katsuta N."/>
            <person name="Sato K."/>
            <person name="Tanikawa M."/>
            <person name="Yamazaki M."/>
            <person name="Ninomiya K."/>
            <person name="Ishibashi T."/>
            <person name="Yamashita H."/>
            <person name="Murakawa K."/>
            <person name="Fujimori K."/>
            <person name="Tanai H."/>
            <person name="Kimata M."/>
            <person name="Watanabe M."/>
            <person name="Hiraoka S."/>
            <person name="Chiba Y."/>
            <person name="Ishida S."/>
            <person name="Ono Y."/>
            <person name="Takiguchi S."/>
            <person name="Watanabe S."/>
            <person name="Yosida M."/>
            <person name="Hotuta T."/>
            <person name="Kusano J."/>
            <person name="Kanehori K."/>
            <person name="Takahashi-Fujii A."/>
            <person name="Hara H."/>
            <person name="Tanase T.-O."/>
            <person name="Nomura Y."/>
            <person name="Togiya S."/>
            <person name="Komai F."/>
            <person name="Hara R."/>
            <person name="Takeuchi K."/>
            <person name="Arita M."/>
            <person name="Imose N."/>
            <person name="Musashino K."/>
            <person name="Yuuki H."/>
            <person name="Oshima A."/>
            <person name="Sasaki N."/>
            <person name="Aotsuka S."/>
            <person name="Yoshikawa Y."/>
            <person name="Matsunawa H."/>
            <person name="Ichihara T."/>
            <person name="Shiohata N."/>
            <person name="Sano S."/>
            <person name="Moriya S."/>
            <person name="Momiyama H."/>
            <person name="Satoh N."/>
            <person name="Takami S."/>
            <person name="Terashima Y."/>
            <person name="Suzuki O."/>
            <person name="Nakagawa S."/>
            <person name="Senoh A."/>
            <person name="Mizoguchi H."/>
            <person name="Goto Y."/>
            <person name="Shimizu F."/>
            <person name="Wakebe H."/>
            <person name="Hishigaki H."/>
            <person name="Watanabe T."/>
            <person name="Sugiyama A."/>
            <person name="Takemoto M."/>
            <person name="Kawakami B."/>
            <person name="Yamazaki M."/>
            <person name="Watanabe K."/>
            <person name="Kumagai A."/>
            <person name="Itakura S."/>
            <person name="Fukuzumi Y."/>
            <person name="Fujimori Y."/>
            <person name="Komiyama M."/>
            <person name="Tashiro H."/>
            <person name="Tanigami A."/>
            <person name="Fujiwara T."/>
            <person name="Ono T."/>
            <person name="Yamada K."/>
            <person name="Fujii Y."/>
            <person name="Ozaki K."/>
            <person name="Hirao M."/>
            <person name="Ohmori Y."/>
            <person name="Kawabata A."/>
            <person name="Hikiji T."/>
            <person name="Kobatake N."/>
            <person name="Inagaki H."/>
            <person name="Ikema Y."/>
            <person name="Okamoto S."/>
            <person name="Okitani R."/>
            <person name="Kawakami T."/>
            <person name="Noguchi S."/>
            <person name="Itoh T."/>
            <person name="Shigeta K."/>
            <person name="Senba T."/>
            <person name="Matsumura K."/>
            <person name="Nakajima Y."/>
            <person name="Mizuno T."/>
            <person name="Morinaga M."/>
            <person name="Sasaki M."/>
            <person name="Togashi T."/>
            <person name="Oyama M."/>
            <person name="Hata H."/>
            <person name="Watanabe M."/>
            <person name="Komatsu T."/>
            <person name="Mizushima-Sugano J."/>
            <person name="Satoh T."/>
            <person name="Shirai Y."/>
            <person name="Takahashi Y."/>
            <person name="Nakagawa K."/>
            <person name="Okumura K."/>
            <person name="Nagase T."/>
            <person name="Nomura N."/>
            <person name="Kikuchi H."/>
            <person name="Masuho Y."/>
            <person name="Yamashita R."/>
            <person name="Nakai K."/>
            <person name="Yada T."/>
            <person name="Nakamura Y."/>
            <person name="Ohara O."/>
            <person name="Isogai T."/>
            <person name="Sugano S."/>
        </authorList>
    </citation>
    <scope>NUCLEOTIDE SEQUENCE [LARGE SCALE MRNA]</scope>
    <source>
        <tissue>Placenta</tissue>
    </source>
</reference>
<reference key="4">
    <citation type="journal article" date="2006" name="Nature">
        <title>Human chromosome 11 DNA sequence and analysis including novel gene identification.</title>
        <authorList>
            <person name="Taylor T.D."/>
            <person name="Noguchi H."/>
            <person name="Totoki Y."/>
            <person name="Toyoda A."/>
            <person name="Kuroki Y."/>
            <person name="Dewar K."/>
            <person name="Lloyd C."/>
            <person name="Itoh T."/>
            <person name="Takeda T."/>
            <person name="Kim D.-W."/>
            <person name="She X."/>
            <person name="Barlow K.F."/>
            <person name="Bloom T."/>
            <person name="Bruford E."/>
            <person name="Chang J.L."/>
            <person name="Cuomo C.A."/>
            <person name="Eichler E."/>
            <person name="FitzGerald M.G."/>
            <person name="Jaffe D.B."/>
            <person name="LaButti K."/>
            <person name="Nicol R."/>
            <person name="Park H.-S."/>
            <person name="Seaman C."/>
            <person name="Sougnez C."/>
            <person name="Yang X."/>
            <person name="Zimmer A.R."/>
            <person name="Zody M.C."/>
            <person name="Birren B.W."/>
            <person name="Nusbaum C."/>
            <person name="Fujiyama A."/>
            <person name="Hattori M."/>
            <person name="Rogers J."/>
            <person name="Lander E.S."/>
            <person name="Sakaki Y."/>
        </authorList>
    </citation>
    <scope>NUCLEOTIDE SEQUENCE [LARGE SCALE GENOMIC DNA]</scope>
</reference>
<reference key="5">
    <citation type="submission" date="2005-07" db="EMBL/GenBank/DDBJ databases">
        <authorList>
            <person name="Mural R.J."/>
            <person name="Istrail S."/>
            <person name="Sutton G.G."/>
            <person name="Florea L."/>
            <person name="Halpern A.L."/>
            <person name="Mobarry C.M."/>
            <person name="Lippert R."/>
            <person name="Walenz B."/>
            <person name="Shatkay H."/>
            <person name="Dew I."/>
            <person name="Miller J.R."/>
            <person name="Flanigan M.J."/>
            <person name="Edwards N.J."/>
            <person name="Bolanos R."/>
            <person name="Fasulo D."/>
            <person name="Halldorsson B.V."/>
            <person name="Hannenhalli S."/>
            <person name="Turner R."/>
            <person name="Yooseph S."/>
            <person name="Lu F."/>
            <person name="Nusskern D.R."/>
            <person name="Shue B.C."/>
            <person name="Zheng X.H."/>
            <person name="Zhong F."/>
            <person name="Delcher A.L."/>
            <person name="Huson D.H."/>
            <person name="Kravitz S.A."/>
            <person name="Mouchard L."/>
            <person name="Reinert K."/>
            <person name="Remington K.A."/>
            <person name="Clark A.G."/>
            <person name="Waterman M.S."/>
            <person name="Eichler E.E."/>
            <person name="Adams M.D."/>
            <person name="Hunkapiller M.W."/>
            <person name="Myers E.W."/>
            <person name="Venter J.C."/>
        </authorList>
    </citation>
    <scope>NUCLEOTIDE SEQUENCE [LARGE SCALE GENOMIC DNA]</scope>
</reference>
<reference key="6">
    <citation type="journal article" date="2004" name="Genome Res.">
        <title>The status, quality, and expansion of the NIH full-length cDNA project: the Mammalian Gene Collection (MGC).</title>
        <authorList>
            <consortium name="The MGC Project Team"/>
        </authorList>
    </citation>
    <scope>NUCLEOTIDE SEQUENCE [LARGE SCALE MRNA]</scope>
    <source>
        <tissue>Brain</tissue>
        <tissue>Uterus</tissue>
    </source>
</reference>
<reference key="7">
    <citation type="journal article" date="2003" name="Nat. Biotechnol.">
        <title>Exploring proteomes and analyzing protein processing by mass spectrometric identification of sorted N-terminal peptides.</title>
        <authorList>
            <person name="Gevaert K."/>
            <person name="Goethals M."/>
            <person name="Martens L."/>
            <person name="Van Damme J."/>
            <person name="Staes A."/>
            <person name="Thomas G.R."/>
            <person name="Vandekerckhove J."/>
        </authorList>
    </citation>
    <scope>PROTEIN SEQUENCE OF 1-8</scope>
    <source>
        <tissue>Platelet</tissue>
    </source>
</reference>
<reference key="8">
    <citation type="journal article" date="2002" name="OMICS">
        <title>Two overlapping divergent transcription units in the human genome: the FEN1/C11orf10 locus.</title>
        <authorList>
            <person name="Adachi N."/>
            <person name="Karanjawala Z.E."/>
            <person name="Matsuzaki Y."/>
            <person name="Koyama H."/>
            <person name="Lieber M.R."/>
        </authorList>
    </citation>
    <scope>SUBCELLULAR LOCATION</scope>
</reference>
<reference key="9">
    <citation type="journal article" date="2009" name="Anal. Chem.">
        <title>Lys-N and trypsin cover complementary parts of the phosphoproteome in a refined SCX-based approach.</title>
        <authorList>
            <person name="Gauci S."/>
            <person name="Helbig A.O."/>
            <person name="Slijper M."/>
            <person name="Krijgsveld J."/>
            <person name="Heck A.J."/>
            <person name="Mohammed S."/>
        </authorList>
    </citation>
    <scope>ACETYLATION [LARGE SCALE ANALYSIS] AT MET-1</scope>
    <scope>IDENTIFICATION BY MASS SPECTROMETRY [LARGE SCALE ANALYSIS]</scope>
</reference>
<reference key="10">
    <citation type="journal article" date="2012" name="Mol. Cell. Proteomics">
        <title>Comparative large-scale characterisation of plant vs. mammal proteins reveals similar and idiosyncratic N-alpha acetylation features.</title>
        <authorList>
            <person name="Bienvenut W.V."/>
            <person name="Sumpton D."/>
            <person name="Martinez A."/>
            <person name="Lilla S."/>
            <person name="Espagne C."/>
            <person name="Meinnel T."/>
            <person name="Giglione C."/>
        </authorList>
    </citation>
    <scope>ACETYLATION [LARGE SCALE ANALYSIS] AT MET-1</scope>
    <scope>IDENTIFICATION BY MASS SPECTROMETRY [LARGE SCALE ANALYSIS]</scope>
</reference>
<reference key="11">
    <citation type="journal article" date="2012" name="Proc. Natl. Acad. Sci. U.S.A.">
        <title>N-terminal acetylome analyses and functional insights of the N-terminal acetyltransferase NatB.</title>
        <authorList>
            <person name="Van Damme P."/>
            <person name="Lasa M."/>
            <person name="Polevoda B."/>
            <person name="Gazquez C."/>
            <person name="Elosegui-Artola A."/>
            <person name="Kim D.S."/>
            <person name="De Juan-Pardo E."/>
            <person name="Demeyer K."/>
            <person name="Hole K."/>
            <person name="Larrea E."/>
            <person name="Timmerman E."/>
            <person name="Prieto J."/>
            <person name="Arnesen T."/>
            <person name="Sherman F."/>
            <person name="Gevaert K."/>
            <person name="Aldabe R."/>
        </authorList>
    </citation>
    <scope>IDENTIFICATION BY MASS SPECTROMETRY [LARGE SCALE ANALYSIS]</scope>
</reference>
<reference key="12">
    <citation type="journal article" date="2015" name="Science">
        <title>Gene essentiality and synthetic lethality in haploid human cells.</title>
        <authorList>
            <person name="Blomen V.A."/>
            <person name="Majek P."/>
            <person name="Jae L.T."/>
            <person name="Bigenzahn J.W."/>
            <person name="Nieuwenhuis J."/>
            <person name="Staring J."/>
            <person name="Sacco R."/>
            <person name="van Diemen F.R."/>
            <person name="Olk N."/>
            <person name="Stukalov A."/>
            <person name="Marceau C."/>
            <person name="Janssen H."/>
            <person name="Carette J.E."/>
            <person name="Bennett K.L."/>
            <person name="Colinge J."/>
            <person name="Superti-Furga G."/>
            <person name="Brummelkamp T.R."/>
        </authorList>
    </citation>
    <scope>FUNCTION</scope>
    <scope>IDENTIFICATION IN THE OLIGOSACCHARYLTRANSFERASE COMPLEX</scope>
    <scope>SUBCELLULAR LOCATION</scope>
</reference>
<reference key="13">
    <citation type="journal article" date="2016" name="Cell Rep.">
        <title>TMEM258 is a component of the oligosaccharyltransferase complex controlling ER stress and intestinal inflammation.</title>
        <authorList>
            <person name="Graham D.B."/>
            <person name="Lefkovith A."/>
            <person name="Deelen P."/>
            <person name="de Klein N."/>
            <person name="Varma M."/>
            <person name="Boroughs A."/>
            <person name="Desch A.N."/>
            <person name="Ng A.C."/>
            <person name="Guzman G."/>
            <person name="Schenone M."/>
            <person name="Petersen C.P."/>
            <person name="Bhan A.K."/>
            <person name="Rivas M.A."/>
            <person name="Daly M.J."/>
            <person name="Carr S.A."/>
            <person name="Wijmenga C."/>
            <person name="Xavier R.J."/>
        </authorList>
    </citation>
    <scope>FUNCTION</scope>
    <scope>TISSUE SPECIFICITY</scope>
    <scope>SUBCELLULAR LOCATION</scope>
    <scope>IDENTIFICATION IN THE OLIGOSACCHARYLTRANSFERASE COMPLEX</scope>
    <scope>INTERACTION WITH RPN1</scope>
</reference>
<reference key="14">
    <citation type="journal article" date="2017" name="J. Cell Biol.">
        <title>Outer nuclear membrane protein Kuduk modulates the LINC complex and nuclear envelope architecture.</title>
        <authorList>
            <person name="Ding Z.Y."/>
            <person name="Wang Y.H."/>
            <person name="Huang Y.C."/>
            <person name="Lee M.C."/>
            <person name="Tseng M.J."/>
            <person name="Chi Y.H."/>
            <person name="Huang M.L."/>
        </authorList>
    </citation>
    <scope>SUBCELLULAR LOCATION</scope>
    <scope>INTERACTION WITH SYNE1; SYNE2 AND SUN1</scope>
</reference>
<reference evidence="13 14" key="15">
    <citation type="journal article" date="2019" name="Science">
        <title>Cryo-electron microscopy structures of human oligosaccharyltransferase complexes OST-A and OST-B.</title>
        <authorList>
            <person name="Ramirez A.S."/>
            <person name="Kowal J."/>
            <person name="Locher K.P."/>
        </authorList>
    </citation>
    <scope>STRUCTURE BY ELECTRON MICROSCOPY (3.50 ANGSTROMS)</scope>
    <scope>IDENTIFICATION IN THE OLIGOSACCHARYL TRANSFERASE (OST) COMPLEX</scope>
    <scope>FUNCTION</scope>
    <scope>PATHWAY</scope>
</reference>
<reference evidence="15" key="16">
    <citation type="journal article" date="2023" name="Nature">
        <title>Visualization of translation and protein biogenesis at the ER membrane.</title>
        <authorList>
            <person name="Gemmer M."/>
            <person name="Chaillet M.L."/>
            <person name="van Loenhout J."/>
            <person name="Cuevas Arenas R."/>
            <person name="Vismpas D."/>
            <person name="Grollers-Mulderij M."/>
            <person name="Koh F.A."/>
            <person name="Albanese P."/>
            <person name="Scheltema R.A."/>
            <person name="Howes S.C."/>
            <person name="Kotecha A."/>
            <person name="Fedry J."/>
            <person name="Forster F."/>
        </authorList>
    </citation>
    <scope>STRUCTURE BY ELECTRON MICROSCOPY (7.60 ANGSTROMS) OF THE STT3A-CONTAINING OLIGOSACCHARYLTRANSFERASE (OST) AND TRANSLOCON COMPLEXES</scope>
    <scope>SUBUNIT</scope>
</reference>
<reference evidence="16" key="17">
    <citation type="journal article" date="2024" name="Cell">
        <title>Positive selection CRISPR screens reveal a druggable pocket in an oligosaccharyltransferase required for inflammatory signaling to NF-kappaB.</title>
        <authorList>
            <person name="Lampson B.L."/>
            <person name="Ramrez A.S."/>
            <person name="Baro M."/>
            <person name="He L."/>
            <person name="Hegde M."/>
            <person name="Koduri V."/>
            <person name="Pfaff J.L."/>
            <person name="Hanna R.E."/>
            <person name="Kowal J."/>
            <person name="Shirole N.H."/>
            <person name="He Y."/>
            <person name="Doench J.G."/>
            <person name="Contessa J.N."/>
            <person name="Locher K.P."/>
            <person name="Kaelin W.G."/>
        </authorList>
    </citation>
    <scope>STRUCTURE BY ELECTRON MICROSCOPY (3.61 ANGSTROMS) OF THE STT3A-CONTAINING OLIGOSACCHARYLTRANSFERASE (OST)</scope>
    <scope>SUBUNIT</scope>
</reference>
<accession>P61165</accession>
<accession>A8K6L8</accession>
<accession>Q9D953</accession>
<accession>Q9Y2Q7</accession>
<comment type="function">
    <text evidence="2 5 6 8">Subunit of the oligosaccharyl transferase (OST) complex that catalyzes the initial transfer of a defined glycan (Glc(3)Man(9)GlcNAc(2) in eukaryotes) from the lipid carrier dolichol-pyrophosphate to an asparagine residue within an Asn-X-Ser/Thr consensus motif in nascent polypeptide chains, the first step in protein N-glycosylation (PubMed:31831667). N-glycosylation occurs cotranslationally and the complex associates with the Sec61 complex at the channel-forming translocon complex that mediates protein translocation across the endoplasmic reticulum (ER). All subunits are required for a maximal enzyme activity (PubMed:26472760, PubMed:27974209). Involved in ER homeostasis in the colonic epithelium (By similarity).</text>
</comment>
<comment type="pathway">
    <text evidence="8">Protein modification; protein glycosylation.</text>
</comment>
<comment type="subunit">
    <text evidence="1 5 6 7 8 9 10">Component of the oligosaccharyltransferase (OST) complex (PubMed:31831667, PubMed:36697828, PubMed:38670073). OST exists in two different complex forms which contain common core subunits RPN1, RPN2, OST48, OST4, DAD1 and TMEM258, either STT3A or STT3B as catalytic subunits, and form-specific accessory subunits (PubMed:26472760, PubMed:27974209, PubMed:31831667, PubMed:36697828, PubMed:38670073). STT3A complex assembly occurs through the formation of 3 subcomplexes. Subcomplex 1 contains RPN1 and TMEM258, subcomplex 2 contains the STT3A-specific subunits STT3A, DC2/OSTC, and KCP2 as well as the core subunit OST4, and subcomplex 3 contains RPN2, DAD1, and OST48. The STT3A complex can form stable complexes with the Sec61 complex or with both the Sec61 and TRAP complexes (By similarity). Interacts with SYNE1 (via KASH domain), SYNE2 (via KASH domain) and SUN1 (PubMed:28716842).</text>
</comment>
<comment type="interaction">
    <interactant intactId="EBI-12019210">
        <id>P61165</id>
    </interactant>
    <interactant intactId="EBI-714543">
        <id>Q15041</id>
        <label>ARL6IP1</label>
    </interactant>
    <organismsDiffer>false</organismsDiffer>
    <experiments>3</experiments>
</comment>
<comment type="interaction">
    <interactant intactId="EBI-12019210">
        <id>P61165</id>
    </interactant>
    <interactant intactId="EBI-725665">
        <id>Q9Y5U9</id>
        <label>IER3IP1</label>
    </interactant>
    <organismsDiffer>false</organismsDiffer>
    <experiments>3</experiments>
</comment>
<comment type="interaction">
    <interactant intactId="EBI-12019210">
        <id>P61165</id>
    </interactant>
    <interactant intactId="EBI-2858252">
        <id>Q6ZSS7</id>
        <label>MFSD6</label>
    </interactant>
    <organismsDiffer>false</organismsDiffer>
    <experiments>3</experiments>
</comment>
<comment type="interaction">
    <interactant intactId="EBI-12019210">
        <id>P61165</id>
    </interactant>
    <interactant intactId="EBI-741480">
        <id>Q9UMX0</id>
        <label>UBQLN1</label>
    </interactant>
    <organismsDiffer>false</organismsDiffer>
    <experiments>3</experiments>
</comment>
<comment type="interaction">
    <interactant intactId="EBI-12019210">
        <id>P61165</id>
    </interactant>
    <interactant intactId="EBI-25475850">
        <id>P0DTC4</id>
        <label>E</label>
    </interactant>
    <organismsDiffer>true</organismsDiffer>
    <experiments>3</experiments>
</comment>
<comment type="subcellular location">
    <subcellularLocation>
        <location evidence="7">Membrane</location>
        <topology evidence="11">Multi-pass membrane protein</topology>
    </subcellularLocation>
    <subcellularLocation>
        <location evidence="5 6">Endoplasmic reticulum</location>
    </subcellularLocation>
    <subcellularLocation>
        <location evidence="4 7">Cytoplasm</location>
    </subcellularLocation>
</comment>
<comment type="tissue specificity">
    <text evidence="6">Ubiquitously expressed.</text>
</comment>
<comment type="similarity">
    <text evidence="11">Belongs to the OST5 family.</text>
</comment>